<proteinExistence type="evidence at transcript level"/>
<gene>
    <name type="primary">tsku</name>
    <name type="synonym">lrcc54</name>
    <name type="synonym">tsk</name>
    <name type="ORF">zgc:56201</name>
</gene>
<sequence>MASLLCLFFSLLGLAAIGAVKNCHPQCRCEVETFGLFDSFSLTKVDCSRIGPGNTPVPIPLDTSHLDLSLNSTTSISDTMLSGPGYTTLVSLDLSSNLIAQISPKAFSKLRYLETLDLSSNALEGLSDGCFTGLPLVELDLSENQFKEFNLDLFTTRTQDLPIMVDLSRNLLTSIFRRTPGHPLYIKSLMLAGNQLKTVPKLNGIPLQYLNLDGNLISSIDTGAFDSLTELVHLSLSGLSELTLIHPGAFRSLKNLQALDLSNNSQLKTLNPNVFSGLVSLQELNLSNTAVTPLSRTVFMQMPNIKSITLGPNVHCWKTHMQGQFHRQIGQAKPNDILTCDNAGLIL</sequence>
<accession>Q58A48</accession>
<accession>Q7ZUT1</accession>
<evidence type="ECO:0000250" key="1">
    <source>
        <dbReference type="UniProtKB" id="Q65Z91"/>
    </source>
</evidence>
<evidence type="ECO:0000255" key="2"/>
<evidence type="ECO:0000269" key="3">
    <source>
    </source>
</evidence>
<evidence type="ECO:0000303" key="4">
    <source>
    </source>
</evidence>
<evidence type="ECO:0000305" key="5"/>
<organism>
    <name type="scientific">Danio rerio</name>
    <name type="common">Zebrafish</name>
    <name type="synonym">Brachydanio rerio</name>
    <dbReference type="NCBI Taxonomy" id="7955"/>
    <lineage>
        <taxon>Eukaryota</taxon>
        <taxon>Metazoa</taxon>
        <taxon>Chordata</taxon>
        <taxon>Craniata</taxon>
        <taxon>Vertebrata</taxon>
        <taxon>Euteleostomi</taxon>
        <taxon>Actinopterygii</taxon>
        <taxon>Neopterygii</taxon>
        <taxon>Teleostei</taxon>
        <taxon>Ostariophysi</taxon>
        <taxon>Cypriniformes</taxon>
        <taxon>Danionidae</taxon>
        <taxon>Danioninae</taxon>
        <taxon>Danio</taxon>
    </lineage>
</organism>
<name>TSK_DANRE</name>
<protein>
    <recommendedName>
        <fullName evidence="4">Tsukushi</fullName>
    </recommendedName>
    <alternativeName>
        <fullName>Leucine-rich repeat-containing protein 54</fullName>
    </alternativeName>
    <alternativeName>
        <fullName>Z-TSK</fullName>
    </alternativeName>
</protein>
<keyword id="KW-0217">Developmental protein</keyword>
<keyword id="KW-0325">Glycoprotein</keyword>
<keyword id="KW-0433">Leucine-rich repeat</keyword>
<keyword id="KW-1185">Reference proteome</keyword>
<keyword id="KW-0677">Repeat</keyword>
<keyword id="KW-0964">Secreted</keyword>
<keyword id="KW-0732">Signal</keyword>
<reference key="1">
    <citation type="journal article" date="2004" name="Dev. Cell">
        <title>Tsukushi functions as an organizer inducer by inhibition of BMP activity in cooperation with chordin.</title>
        <authorList>
            <person name="Ohta K."/>
            <person name="Lupo G."/>
            <person name="Kuriyama S."/>
            <person name="Keynes R."/>
            <person name="Holt C.E."/>
            <person name="Harris W.A."/>
            <person name="Tanaka H."/>
            <person name="Ohnuma S."/>
        </authorList>
    </citation>
    <scope>NUCLEOTIDE SEQUENCE [MRNA]</scope>
    <scope>FUNCTION</scope>
    <scope>DEVELOPMENTAL STAGE</scope>
</reference>
<reference key="2">
    <citation type="submission" date="2003-03" db="EMBL/GenBank/DDBJ databases">
        <authorList>
            <consortium name="NIH - Zebrafish Gene Collection (ZGC) project"/>
        </authorList>
    </citation>
    <scope>NUCLEOTIDE SEQUENCE [LARGE SCALE MRNA]</scope>
</reference>
<comment type="function">
    <text evidence="1 3">Contributes to various developmental events through its interactions with multiple signaling pathways (By similarity). Dorsalizing factor which functions as an inhibitor of bone morphogenetic proteins during gastrulation (PubMed:15363410).</text>
</comment>
<comment type="subunit">
    <text evidence="1">Forms a ternary complex with chordin/CHRD and BMP4.</text>
</comment>
<comment type="subcellular location">
    <subcellularLocation>
        <location evidence="1">Secreted</location>
    </subcellularLocation>
</comment>
<comment type="developmental stage">
    <text evidence="3">Expressed in the germ ring including the shield at shield stage and in the tailbud at 10-somite stage.</text>
</comment>
<comment type="miscellaneous">
    <text evidence="1">This factor is named 'Tsukushi' because its expression pattern in chick embryos is similar to the shape of the Japanese horsetail plant, tsukushi.</text>
</comment>
<feature type="signal peptide" evidence="2">
    <location>
        <begin position="1"/>
        <end position="19"/>
    </location>
</feature>
<feature type="chain" id="PRO_0000240411" description="Tsukushi">
    <location>
        <begin position="20"/>
        <end position="347"/>
    </location>
</feature>
<feature type="domain" description="LRRNT">
    <location>
        <begin position="20"/>
        <end position="61"/>
    </location>
</feature>
<feature type="repeat" description="LRR 1">
    <location>
        <begin position="62"/>
        <end position="83"/>
    </location>
</feature>
<feature type="repeat" description="LRR 2">
    <location>
        <begin position="88"/>
        <end position="109"/>
    </location>
</feature>
<feature type="repeat" description="LRR 3">
    <location>
        <begin position="112"/>
        <end position="133"/>
    </location>
</feature>
<feature type="repeat" description="LRR 4">
    <location>
        <begin position="135"/>
        <end position="156"/>
    </location>
</feature>
<feature type="repeat" description="LRR 5">
    <location>
        <begin position="160"/>
        <end position="175"/>
    </location>
</feature>
<feature type="repeat" description="LRR 6">
    <location>
        <begin position="185"/>
        <end position="205"/>
    </location>
</feature>
<feature type="repeat" description="LRR 7">
    <location>
        <begin position="206"/>
        <end position="227"/>
    </location>
</feature>
<feature type="repeat" description="LRR 8">
    <location>
        <begin position="230"/>
        <end position="252"/>
    </location>
</feature>
<feature type="repeat" description="LRR 9">
    <location>
        <begin position="255"/>
        <end position="277"/>
    </location>
</feature>
<feature type="repeat" description="LRR 10">
    <location>
        <begin position="280"/>
        <end position="301"/>
    </location>
</feature>
<feature type="glycosylation site" description="N-linked (GlcNAc...) asparagine" evidence="2">
    <location>
        <position position="285"/>
    </location>
</feature>
<feature type="sequence conflict" description="In Ref. 1; BAD93182." evidence="5" ref="1">
    <original>T</original>
    <variation>I</variation>
    <location>
        <position position="73"/>
    </location>
</feature>
<feature type="sequence conflict" description="In Ref. 1; BAD93182." evidence="5" ref="1">
    <original>S</original>
    <variation>R</variation>
    <location>
        <position position="265"/>
    </location>
</feature>
<feature type="sequence conflict" description="In Ref. 1; BAD93182." evidence="5" ref="1">
    <original>N</original>
    <variation>D</variation>
    <location>
        <position position="273"/>
    </location>
</feature>
<feature type="sequence conflict" description="In Ref. 1; BAD93182." evidence="5" ref="1">
    <original>M</original>
    <variation>K</variation>
    <location>
        <position position="321"/>
    </location>
</feature>
<feature type="sequence conflict" description="In Ref. 1; BAD93182." evidence="5" ref="1">
    <original>P</original>
    <variation>H</variation>
    <location>
        <position position="334"/>
    </location>
</feature>
<dbReference type="EMBL" id="AB100034">
    <property type="protein sequence ID" value="BAD93182.1"/>
    <property type="molecule type" value="mRNA"/>
</dbReference>
<dbReference type="EMBL" id="BC047843">
    <property type="protein sequence ID" value="AAH47843.1"/>
    <property type="molecule type" value="mRNA"/>
</dbReference>
<dbReference type="SMR" id="Q58A48"/>
<dbReference type="FunCoup" id="Q58A48">
    <property type="interactions" value="1962"/>
</dbReference>
<dbReference type="STRING" id="7955.ENSDARP00000110663"/>
<dbReference type="GlyCosmos" id="Q58A48">
    <property type="glycosylation" value="1 site, No reported glycans"/>
</dbReference>
<dbReference type="PaxDb" id="7955-ENSDARP00000110663"/>
<dbReference type="AGR" id="ZFIN:ZDB-GENE-030131-4683"/>
<dbReference type="ZFIN" id="ZDB-GENE-030131-4683">
    <property type="gene designation" value="tsku"/>
</dbReference>
<dbReference type="eggNOG" id="KOG0619">
    <property type="taxonomic scope" value="Eukaryota"/>
</dbReference>
<dbReference type="InParanoid" id="Q58A48"/>
<dbReference type="Reactome" id="R-DRE-430116">
    <property type="pathway name" value="GP1b-IX-V activation signalling"/>
</dbReference>
<dbReference type="Reactome" id="R-DRE-75892">
    <property type="pathway name" value="Platelet Adhesion to exposed collagen"/>
</dbReference>
<dbReference type="PRO" id="PR:Q58A48"/>
<dbReference type="Proteomes" id="UP000000437">
    <property type="component" value="Unplaced"/>
</dbReference>
<dbReference type="GO" id="GO:0031012">
    <property type="term" value="C:extracellular matrix"/>
    <property type="evidence" value="ECO:0000318"/>
    <property type="project" value="GO_Central"/>
</dbReference>
<dbReference type="GO" id="GO:0005615">
    <property type="term" value="C:extracellular space"/>
    <property type="evidence" value="ECO:0000250"/>
    <property type="project" value="UniProtKB"/>
</dbReference>
<dbReference type="GO" id="GO:0098868">
    <property type="term" value="P:bone growth"/>
    <property type="evidence" value="ECO:0000250"/>
    <property type="project" value="UniProtKB"/>
</dbReference>
<dbReference type="GO" id="GO:0097009">
    <property type="term" value="P:energy homeostasis"/>
    <property type="evidence" value="ECO:0000250"/>
    <property type="project" value="UniProtKB"/>
</dbReference>
<dbReference type="GO" id="GO:0003431">
    <property type="term" value="P:growth plate cartilage chondrocyte development"/>
    <property type="evidence" value="ECO:0000250"/>
    <property type="project" value="UniProtKB"/>
</dbReference>
<dbReference type="FunFam" id="3.80.10.10:FF:000960">
    <property type="entry name" value="Tsukushin"/>
    <property type="match status" value="1"/>
</dbReference>
<dbReference type="FunFam" id="3.80.10.10:FF:000308">
    <property type="entry name" value="tsukushin isoform X3"/>
    <property type="match status" value="1"/>
</dbReference>
<dbReference type="Gene3D" id="3.80.10.10">
    <property type="entry name" value="Ribonuclease Inhibitor"/>
    <property type="match status" value="3"/>
</dbReference>
<dbReference type="InterPro" id="IPR001611">
    <property type="entry name" value="Leu-rich_rpt"/>
</dbReference>
<dbReference type="InterPro" id="IPR003591">
    <property type="entry name" value="Leu-rich_rpt_typical-subtyp"/>
</dbReference>
<dbReference type="InterPro" id="IPR032675">
    <property type="entry name" value="LRR_dom_sf"/>
</dbReference>
<dbReference type="InterPro" id="IPR050333">
    <property type="entry name" value="SLRP"/>
</dbReference>
<dbReference type="PANTHER" id="PTHR45712">
    <property type="entry name" value="AGAP008170-PA"/>
    <property type="match status" value="1"/>
</dbReference>
<dbReference type="PANTHER" id="PTHR45712:SF22">
    <property type="entry name" value="INSULIN-LIKE GROWTH FACTOR-BINDING PROTEIN COMPLEX ACID LABILE SUBUNIT"/>
    <property type="match status" value="1"/>
</dbReference>
<dbReference type="Pfam" id="PF13855">
    <property type="entry name" value="LRR_8"/>
    <property type="match status" value="2"/>
</dbReference>
<dbReference type="PRINTS" id="PR00019">
    <property type="entry name" value="LEURICHRPT"/>
</dbReference>
<dbReference type="SMART" id="SM00369">
    <property type="entry name" value="LRR_TYP"/>
    <property type="match status" value="6"/>
</dbReference>
<dbReference type="SUPFAM" id="SSF52058">
    <property type="entry name" value="L domain-like"/>
    <property type="match status" value="1"/>
</dbReference>
<dbReference type="PROSITE" id="PS51450">
    <property type="entry name" value="LRR"/>
    <property type="match status" value="8"/>
</dbReference>